<dbReference type="EMBL" id="CU329670">
    <property type="protein sequence ID" value="CAB90781.1"/>
    <property type="molecule type" value="Genomic_DNA"/>
</dbReference>
<dbReference type="RefSeq" id="NP_594073.1">
    <property type="nucleotide sequence ID" value="NM_001019497.1"/>
</dbReference>
<dbReference type="SMR" id="Q9UT70"/>
<dbReference type="FunCoup" id="Q9UT70">
    <property type="interactions" value="143"/>
</dbReference>
<dbReference type="STRING" id="284812.Q9UT70"/>
<dbReference type="PaxDb" id="4896-SPAC3G9.16c.1"/>
<dbReference type="EnsemblFungi" id="SPAC3G9.16c.1">
    <property type="protein sequence ID" value="SPAC3G9.16c.1:pep"/>
    <property type="gene ID" value="SPAC3G9.16c"/>
</dbReference>
<dbReference type="GeneID" id="2543335"/>
<dbReference type="KEGG" id="spo:2543335"/>
<dbReference type="PomBase" id="SPAC3G9.16c">
    <property type="gene designation" value="bet5"/>
</dbReference>
<dbReference type="VEuPathDB" id="FungiDB:SPAC3G9.16c"/>
<dbReference type="eggNOG" id="KOG3368">
    <property type="taxonomic scope" value="Eukaryota"/>
</dbReference>
<dbReference type="HOGENOM" id="CLU_053380_4_0_1"/>
<dbReference type="InParanoid" id="Q9UT70"/>
<dbReference type="OMA" id="GKLMYGM"/>
<dbReference type="PhylomeDB" id="Q9UT70"/>
<dbReference type="Reactome" id="R-SPO-204005">
    <property type="pathway name" value="COPII-mediated vesicle transport"/>
</dbReference>
<dbReference type="Reactome" id="R-SPO-6798695">
    <property type="pathway name" value="Neutrophil degranulation"/>
</dbReference>
<dbReference type="Reactome" id="R-SPO-8876198">
    <property type="pathway name" value="RAB GEFs exchange GTP for GDP on RABs"/>
</dbReference>
<dbReference type="PRO" id="PR:Q9UT70"/>
<dbReference type="Proteomes" id="UP000002485">
    <property type="component" value="Chromosome I"/>
</dbReference>
<dbReference type="GO" id="GO:0005801">
    <property type="term" value="C:cis-Golgi network"/>
    <property type="evidence" value="ECO:0000303"/>
    <property type="project" value="PomBase"/>
</dbReference>
<dbReference type="GO" id="GO:0005829">
    <property type="term" value="C:cytosol"/>
    <property type="evidence" value="ECO:0007005"/>
    <property type="project" value="PomBase"/>
</dbReference>
<dbReference type="GO" id="GO:0005783">
    <property type="term" value="C:endoplasmic reticulum"/>
    <property type="evidence" value="ECO:0007669"/>
    <property type="project" value="UniProtKB-SubCell"/>
</dbReference>
<dbReference type="GO" id="GO:0005634">
    <property type="term" value="C:nucleus"/>
    <property type="evidence" value="ECO:0007005"/>
    <property type="project" value="PomBase"/>
</dbReference>
<dbReference type="GO" id="GO:0030008">
    <property type="term" value="C:TRAPP complex"/>
    <property type="evidence" value="ECO:0000318"/>
    <property type="project" value="GO_Central"/>
</dbReference>
<dbReference type="GO" id="GO:1990070">
    <property type="term" value="C:TRAPPI protein complex"/>
    <property type="evidence" value="ECO:0000266"/>
    <property type="project" value="PomBase"/>
</dbReference>
<dbReference type="GO" id="GO:1990071">
    <property type="term" value="C:TRAPPII protein complex"/>
    <property type="evidence" value="ECO:0000266"/>
    <property type="project" value="PomBase"/>
</dbReference>
<dbReference type="GO" id="GO:1990072">
    <property type="term" value="C:TRAPPIII protein complex"/>
    <property type="evidence" value="ECO:0000266"/>
    <property type="project" value="PomBase"/>
</dbReference>
<dbReference type="GO" id="GO:0006888">
    <property type="term" value="P:endoplasmic reticulum to Golgi vesicle-mediated transport"/>
    <property type="evidence" value="ECO:0000318"/>
    <property type="project" value="GO_Central"/>
</dbReference>
<dbReference type="GO" id="GO:0006891">
    <property type="term" value="P:intra-Golgi vesicle-mediated transport"/>
    <property type="evidence" value="ECO:0000305"/>
    <property type="project" value="PomBase"/>
</dbReference>
<dbReference type="GO" id="GO:0006886">
    <property type="term" value="P:intracellular protein transport"/>
    <property type="evidence" value="ECO:0000305"/>
    <property type="project" value="PomBase"/>
</dbReference>
<dbReference type="GO" id="GO:0016236">
    <property type="term" value="P:macroautophagy"/>
    <property type="evidence" value="ECO:0000305"/>
    <property type="project" value="PomBase"/>
</dbReference>
<dbReference type="CDD" id="cd14855">
    <property type="entry name" value="TRAPPC1_MUM2"/>
    <property type="match status" value="1"/>
</dbReference>
<dbReference type="Gene3D" id="3.30.450.70">
    <property type="match status" value="1"/>
</dbReference>
<dbReference type="InterPro" id="IPR011012">
    <property type="entry name" value="Longin-like_dom_sf"/>
</dbReference>
<dbReference type="InterPro" id="IPR007233">
    <property type="entry name" value="TRAPPC"/>
</dbReference>
<dbReference type="PANTHER" id="PTHR23249">
    <property type="entry name" value="TRAFFICKING PROTEIN PARTICLE COMPLEX SUBUNIT"/>
    <property type="match status" value="1"/>
</dbReference>
<dbReference type="PANTHER" id="PTHR23249:SF16">
    <property type="entry name" value="TRAFFICKING PROTEIN PARTICLE COMPLEX SUBUNIT 1"/>
    <property type="match status" value="1"/>
</dbReference>
<dbReference type="Pfam" id="PF04099">
    <property type="entry name" value="Sybindin"/>
    <property type="match status" value="1"/>
</dbReference>
<dbReference type="SMART" id="SM01399">
    <property type="entry name" value="Sybindin"/>
    <property type="match status" value="1"/>
</dbReference>
<dbReference type="SUPFAM" id="SSF64356">
    <property type="entry name" value="SNARE-like"/>
    <property type="match status" value="1"/>
</dbReference>
<keyword id="KW-0256">Endoplasmic reticulum</keyword>
<keyword id="KW-0931">ER-Golgi transport</keyword>
<keyword id="KW-0333">Golgi apparatus</keyword>
<keyword id="KW-1185">Reference proteome</keyword>
<keyword id="KW-0813">Transport</keyword>
<reference key="1">
    <citation type="journal article" date="2002" name="Nature">
        <title>The genome sequence of Schizosaccharomyces pombe.</title>
        <authorList>
            <person name="Wood V."/>
            <person name="Gwilliam R."/>
            <person name="Rajandream M.A."/>
            <person name="Lyne M.H."/>
            <person name="Lyne R."/>
            <person name="Stewart A."/>
            <person name="Sgouros J.G."/>
            <person name="Peat N."/>
            <person name="Hayles J."/>
            <person name="Baker S.G."/>
            <person name="Basham D."/>
            <person name="Bowman S."/>
            <person name="Brooks K."/>
            <person name="Brown D."/>
            <person name="Brown S."/>
            <person name="Chillingworth T."/>
            <person name="Churcher C.M."/>
            <person name="Collins M."/>
            <person name="Connor R."/>
            <person name="Cronin A."/>
            <person name="Davis P."/>
            <person name="Feltwell T."/>
            <person name="Fraser A."/>
            <person name="Gentles S."/>
            <person name="Goble A."/>
            <person name="Hamlin N."/>
            <person name="Harris D.E."/>
            <person name="Hidalgo J."/>
            <person name="Hodgson G."/>
            <person name="Holroyd S."/>
            <person name="Hornsby T."/>
            <person name="Howarth S."/>
            <person name="Huckle E.J."/>
            <person name="Hunt S."/>
            <person name="Jagels K."/>
            <person name="James K.D."/>
            <person name="Jones L."/>
            <person name="Jones M."/>
            <person name="Leather S."/>
            <person name="McDonald S."/>
            <person name="McLean J."/>
            <person name="Mooney P."/>
            <person name="Moule S."/>
            <person name="Mungall K.L."/>
            <person name="Murphy L.D."/>
            <person name="Niblett D."/>
            <person name="Odell C."/>
            <person name="Oliver K."/>
            <person name="O'Neil S."/>
            <person name="Pearson D."/>
            <person name="Quail M.A."/>
            <person name="Rabbinowitsch E."/>
            <person name="Rutherford K.M."/>
            <person name="Rutter S."/>
            <person name="Saunders D."/>
            <person name="Seeger K."/>
            <person name="Sharp S."/>
            <person name="Skelton J."/>
            <person name="Simmonds M.N."/>
            <person name="Squares R."/>
            <person name="Squares S."/>
            <person name="Stevens K."/>
            <person name="Taylor K."/>
            <person name="Taylor R.G."/>
            <person name="Tivey A."/>
            <person name="Walsh S.V."/>
            <person name="Warren T."/>
            <person name="Whitehead S."/>
            <person name="Woodward J.R."/>
            <person name="Volckaert G."/>
            <person name="Aert R."/>
            <person name="Robben J."/>
            <person name="Grymonprez B."/>
            <person name="Weltjens I."/>
            <person name="Vanstreels E."/>
            <person name="Rieger M."/>
            <person name="Schaefer M."/>
            <person name="Mueller-Auer S."/>
            <person name="Gabel C."/>
            <person name="Fuchs M."/>
            <person name="Duesterhoeft A."/>
            <person name="Fritzc C."/>
            <person name="Holzer E."/>
            <person name="Moestl D."/>
            <person name="Hilbert H."/>
            <person name="Borzym K."/>
            <person name="Langer I."/>
            <person name="Beck A."/>
            <person name="Lehrach H."/>
            <person name="Reinhardt R."/>
            <person name="Pohl T.M."/>
            <person name="Eger P."/>
            <person name="Zimmermann W."/>
            <person name="Wedler H."/>
            <person name="Wambutt R."/>
            <person name="Purnelle B."/>
            <person name="Goffeau A."/>
            <person name="Cadieu E."/>
            <person name="Dreano S."/>
            <person name="Gloux S."/>
            <person name="Lelaure V."/>
            <person name="Mottier S."/>
            <person name="Galibert F."/>
            <person name="Aves S.J."/>
            <person name="Xiang Z."/>
            <person name="Hunt C."/>
            <person name="Moore K."/>
            <person name="Hurst S.M."/>
            <person name="Lucas M."/>
            <person name="Rochet M."/>
            <person name="Gaillardin C."/>
            <person name="Tallada V.A."/>
            <person name="Garzon A."/>
            <person name="Thode G."/>
            <person name="Daga R.R."/>
            <person name="Cruzado L."/>
            <person name="Jimenez J."/>
            <person name="Sanchez M."/>
            <person name="del Rey F."/>
            <person name="Benito J."/>
            <person name="Dominguez A."/>
            <person name="Revuelta J.L."/>
            <person name="Moreno S."/>
            <person name="Armstrong J."/>
            <person name="Forsburg S.L."/>
            <person name="Cerutti L."/>
            <person name="Lowe T."/>
            <person name="McCombie W.R."/>
            <person name="Paulsen I."/>
            <person name="Potashkin J."/>
            <person name="Shpakovski G.V."/>
            <person name="Ussery D."/>
            <person name="Barrell B.G."/>
            <person name="Nurse P."/>
        </authorList>
    </citation>
    <scope>NUCLEOTIDE SEQUENCE [LARGE SCALE GENOMIC DNA]</scope>
    <source>
        <strain>972 / ATCC 24843</strain>
    </source>
</reference>
<evidence type="ECO:0000250" key="1"/>
<evidence type="ECO:0000305" key="2"/>
<accession>Q9UT70</accession>
<accession>Q9P6L1</accession>
<feature type="chain" id="PRO_0000211564" description="Transport protein particle subunit bet5">
    <location>
        <begin position="1"/>
        <end position="155"/>
    </location>
</feature>
<name>BET5_SCHPO</name>
<sequence>MTIYAFYIYSRKCECVFAHRWKPSDRNSMETLVSQLEQNSIEDDMEKLIFGVVFSLRNMVKKITADQDQFMSYTTSKYKLHFYETPTNLRLIFITNPKIDSLTHVLQQIYTTLYVEFVVKHPLYTHVPPSAEEGGINCEIFRITLDRFVRTLSCF</sequence>
<gene>
    <name type="primary">bet5</name>
    <name type="ORF">SPAC3G9.16c</name>
    <name type="ORF">SPAC688.15</name>
</gene>
<organism>
    <name type="scientific">Schizosaccharomyces pombe (strain 972 / ATCC 24843)</name>
    <name type="common">Fission yeast</name>
    <dbReference type="NCBI Taxonomy" id="284812"/>
    <lineage>
        <taxon>Eukaryota</taxon>
        <taxon>Fungi</taxon>
        <taxon>Dikarya</taxon>
        <taxon>Ascomycota</taxon>
        <taxon>Taphrinomycotina</taxon>
        <taxon>Schizosaccharomycetes</taxon>
        <taxon>Schizosaccharomycetales</taxon>
        <taxon>Schizosaccharomycetaceae</taxon>
        <taxon>Schizosaccharomyces</taxon>
    </lineage>
</organism>
<comment type="function">
    <text>May play a role in vesicular transport from endoplasmic reticulum to Golgi.</text>
</comment>
<comment type="subunit">
    <text evidence="1">Part of the multisubunit TRAPP (transport protein particle) complex composed of bet3, bet5, trs20, trs23, trs31, trs33, trs65, trs85, trs120 and trs130.</text>
</comment>
<comment type="subcellular location">
    <subcellularLocation>
        <location evidence="1">Golgi apparatus</location>
        <location evidence="1">cis-Golgi network</location>
    </subcellularLocation>
    <subcellularLocation>
        <location evidence="1">Endoplasmic reticulum</location>
    </subcellularLocation>
</comment>
<comment type="similarity">
    <text evidence="2">Belongs to the TRAPP small subunits family. BET5 subfamily.</text>
</comment>
<proteinExistence type="inferred from homology"/>
<protein>
    <recommendedName>
        <fullName>Transport protein particle subunit bet5</fullName>
    </recommendedName>
</protein>